<keyword id="KW-0963">Cytoplasm</keyword>
<keyword id="KW-0690">Ribosome biogenesis</keyword>
<comment type="function">
    <text evidence="1">One of several proteins that assist in the late maturation steps of the functional core of the 30S ribosomal subunit. Associates with free 30S ribosomal subunits (but not with 30S subunits that are part of 70S ribosomes or polysomes). Required for efficient processing of 16S rRNA. May interact with the 5'-terminal helix region of 16S rRNA.</text>
</comment>
<comment type="subunit">
    <text evidence="1">Monomer. Binds 30S ribosomal subunits, but not 50S ribosomal subunits or 70S ribosomes.</text>
</comment>
<comment type="subcellular location">
    <subcellularLocation>
        <location evidence="1">Cytoplasm</location>
    </subcellularLocation>
</comment>
<comment type="similarity">
    <text evidence="1">Belongs to the RbfA family.</text>
</comment>
<proteinExistence type="inferred from homology"/>
<dbReference type="EMBL" id="CP001050">
    <property type="protein sequence ID" value="ACF29945.1"/>
    <property type="molecule type" value="Genomic_DNA"/>
</dbReference>
<dbReference type="RefSeq" id="WP_003692998.1">
    <property type="nucleotide sequence ID" value="NC_011035.1"/>
</dbReference>
<dbReference type="SMR" id="B4RMA9"/>
<dbReference type="KEGG" id="ngk:NGK_1269"/>
<dbReference type="HOGENOM" id="CLU_089475_5_0_4"/>
<dbReference type="Proteomes" id="UP000002564">
    <property type="component" value="Chromosome"/>
</dbReference>
<dbReference type="GO" id="GO:0005829">
    <property type="term" value="C:cytosol"/>
    <property type="evidence" value="ECO:0007669"/>
    <property type="project" value="TreeGrafter"/>
</dbReference>
<dbReference type="GO" id="GO:0043024">
    <property type="term" value="F:ribosomal small subunit binding"/>
    <property type="evidence" value="ECO:0007669"/>
    <property type="project" value="TreeGrafter"/>
</dbReference>
<dbReference type="GO" id="GO:0030490">
    <property type="term" value="P:maturation of SSU-rRNA"/>
    <property type="evidence" value="ECO:0007669"/>
    <property type="project" value="UniProtKB-UniRule"/>
</dbReference>
<dbReference type="FunFam" id="3.30.300.20:FF:000019">
    <property type="entry name" value="Ribosome-binding factor A"/>
    <property type="match status" value="1"/>
</dbReference>
<dbReference type="Gene3D" id="3.30.300.20">
    <property type="match status" value="1"/>
</dbReference>
<dbReference type="HAMAP" id="MF_00003">
    <property type="entry name" value="RbfA"/>
    <property type="match status" value="1"/>
</dbReference>
<dbReference type="InterPro" id="IPR015946">
    <property type="entry name" value="KH_dom-like_a/b"/>
</dbReference>
<dbReference type="InterPro" id="IPR000238">
    <property type="entry name" value="RbfA"/>
</dbReference>
<dbReference type="InterPro" id="IPR023799">
    <property type="entry name" value="RbfA_dom_sf"/>
</dbReference>
<dbReference type="InterPro" id="IPR020053">
    <property type="entry name" value="Ribosome-bd_factorA_CS"/>
</dbReference>
<dbReference type="NCBIfam" id="TIGR00082">
    <property type="entry name" value="rbfA"/>
    <property type="match status" value="1"/>
</dbReference>
<dbReference type="PANTHER" id="PTHR33515">
    <property type="entry name" value="RIBOSOME-BINDING FACTOR A, CHLOROPLASTIC-RELATED"/>
    <property type="match status" value="1"/>
</dbReference>
<dbReference type="PANTHER" id="PTHR33515:SF1">
    <property type="entry name" value="RIBOSOME-BINDING FACTOR A, CHLOROPLASTIC-RELATED"/>
    <property type="match status" value="1"/>
</dbReference>
<dbReference type="Pfam" id="PF02033">
    <property type="entry name" value="RBFA"/>
    <property type="match status" value="1"/>
</dbReference>
<dbReference type="SUPFAM" id="SSF89919">
    <property type="entry name" value="Ribosome-binding factor A, RbfA"/>
    <property type="match status" value="1"/>
</dbReference>
<dbReference type="PROSITE" id="PS01319">
    <property type="entry name" value="RBFA"/>
    <property type="match status" value="1"/>
</dbReference>
<evidence type="ECO:0000255" key="1">
    <source>
        <dbReference type="HAMAP-Rule" id="MF_00003"/>
    </source>
</evidence>
<gene>
    <name evidence="1" type="primary">rbfA</name>
    <name type="ordered locus">NGK_1269</name>
</gene>
<protein>
    <recommendedName>
        <fullName evidence="1">Ribosome-binding factor A</fullName>
    </recommendedName>
</protein>
<sequence length="123" mass="14383">MRKPQRGYARQDRVKEQIMRELAELVRTGLKDPRAGFITINEVEVTRDYSHATVFYTVLNQDTREITEEVLEHARGHLRSELSKRIKLFKIPELHFKYDESLERGMSLSALIDQVAAEKPVED</sequence>
<organism>
    <name type="scientific">Neisseria gonorrhoeae (strain NCCP11945)</name>
    <dbReference type="NCBI Taxonomy" id="521006"/>
    <lineage>
        <taxon>Bacteria</taxon>
        <taxon>Pseudomonadati</taxon>
        <taxon>Pseudomonadota</taxon>
        <taxon>Betaproteobacteria</taxon>
        <taxon>Neisseriales</taxon>
        <taxon>Neisseriaceae</taxon>
        <taxon>Neisseria</taxon>
    </lineage>
</organism>
<accession>B4RMA9</accession>
<reference key="1">
    <citation type="journal article" date="2008" name="J. Bacteriol.">
        <title>Complete genome sequence of Neisseria gonorrhoeae NCCP11945.</title>
        <authorList>
            <person name="Chung G.T."/>
            <person name="Yoo J.S."/>
            <person name="Oh H.B."/>
            <person name="Lee Y.S."/>
            <person name="Cha S.H."/>
            <person name="Kim S.J."/>
            <person name="Yoo C.K."/>
        </authorList>
    </citation>
    <scope>NUCLEOTIDE SEQUENCE [LARGE SCALE GENOMIC DNA]</scope>
    <source>
        <strain>NCCP11945</strain>
    </source>
</reference>
<feature type="chain" id="PRO_1000088909" description="Ribosome-binding factor A">
    <location>
        <begin position="1"/>
        <end position="123"/>
    </location>
</feature>
<name>RBFA_NEIG2</name>